<dbReference type="EMBL" id="DQ291132">
    <property type="protein sequence ID" value="ABB81929.1"/>
    <property type="molecule type" value="Genomic_DNA"/>
</dbReference>
<dbReference type="RefSeq" id="YP_635861.1">
    <property type="nucleotide sequence ID" value="NC_008099.1"/>
</dbReference>
<dbReference type="SMR" id="Q20EY4"/>
<dbReference type="GeneID" id="4100107"/>
<dbReference type="GO" id="GO:0009535">
    <property type="term" value="C:chloroplast thylakoid membrane"/>
    <property type="evidence" value="ECO:0007669"/>
    <property type="project" value="UniProtKB-SubCell"/>
</dbReference>
<dbReference type="GO" id="GO:0009523">
    <property type="term" value="C:photosystem II"/>
    <property type="evidence" value="ECO:0007669"/>
    <property type="project" value="UniProtKB-KW"/>
</dbReference>
<dbReference type="GO" id="GO:0015979">
    <property type="term" value="P:photosynthesis"/>
    <property type="evidence" value="ECO:0007669"/>
    <property type="project" value="UniProtKB-KW"/>
</dbReference>
<dbReference type="HAMAP" id="MF_01329">
    <property type="entry name" value="PSII_Psb30_Ycf12"/>
    <property type="match status" value="1"/>
</dbReference>
<dbReference type="InterPro" id="IPR010284">
    <property type="entry name" value="PSII_Ycf12_core-subunit"/>
</dbReference>
<dbReference type="NCBIfam" id="NF010239">
    <property type="entry name" value="PRK13686.1"/>
    <property type="match status" value="1"/>
</dbReference>
<dbReference type="Pfam" id="PF05969">
    <property type="entry name" value="PSII_Ycf12"/>
    <property type="match status" value="1"/>
</dbReference>
<gene>
    <name evidence="1" type="primary">psb30</name>
    <name evidence="1" type="synonym">ycf12</name>
</gene>
<feature type="chain" id="PRO_0000242472" description="Photosystem II reaction center protein Psb30">
    <location>
        <begin position="1"/>
        <end position="33"/>
    </location>
</feature>
<feature type="transmembrane region" description="Helical" evidence="1">
    <location>
        <begin position="5"/>
        <end position="25"/>
    </location>
</feature>
<protein>
    <recommendedName>
        <fullName evidence="1">Photosystem II reaction center protein Psb30</fullName>
    </recommendedName>
    <alternativeName>
        <fullName evidence="1">Photosystem II reaction center protein Ycf12</fullName>
    </alternativeName>
</protein>
<reference key="1">
    <citation type="journal article" date="2006" name="BMC Biol.">
        <title>The complete chloroplast DNA sequence of the green alga Oltmannsiellopsis viridis reveals a distinctive quadripartite architecture in the chloroplast genome of early diverging ulvophytes.</title>
        <authorList>
            <person name="Pombert J.-F."/>
            <person name="Lemieux C."/>
            <person name="Turmel M."/>
        </authorList>
    </citation>
    <scope>NUCLEOTIDE SEQUENCE [LARGE SCALE GENOMIC DNA]</scope>
</reference>
<proteinExistence type="inferred from homology"/>
<name>PSB30_OLTVI</name>
<sequence>MSLEVILQLGSILLVVAAGPLVIVLLSVNEGNL</sequence>
<comment type="function">
    <text evidence="1">A core subunit of photosystem II (PSII), probably helps stabilize the reaction center.</text>
</comment>
<comment type="subunit">
    <text evidence="1">PSII is composed of 1 copy each of membrane proteins PsbA, PsbB, PsbC, PsbD, PsbE, PsbF, PsbH, PsbI, PsbJ, PsbK, PsbL, PsbM, PsbT, PsbX, PsbY, PsbZ, Psb30/Ycf12, peripheral proteins of the oxygen-evolving complex and a large number of cofactors. It forms dimeric complexes.</text>
</comment>
<comment type="subcellular location">
    <subcellularLocation>
        <location evidence="1">Plastid</location>
        <location evidence="1">Chloroplast thylakoid membrane</location>
        <topology evidence="1">Single-pass membrane protein</topology>
    </subcellularLocation>
</comment>
<comment type="similarity">
    <text evidence="1">Belongs to the Psb30/Ycf12 family.</text>
</comment>
<keyword id="KW-0150">Chloroplast</keyword>
<keyword id="KW-0472">Membrane</keyword>
<keyword id="KW-0602">Photosynthesis</keyword>
<keyword id="KW-0604">Photosystem II</keyword>
<keyword id="KW-0934">Plastid</keyword>
<keyword id="KW-0793">Thylakoid</keyword>
<keyword id="KW-0812">Transmembrane</keyword>
<keyword id="KW-1133">Transmembrane helix</keyword>
<accession>Q20EY4</accession>
<geneLocation type="chloroplast"/>
<evidence type="ECO:0000255" key="1">
    <source>
        <dbReference type="HAMAP-Rule" id="MF_01329"/>
    </source>
</evidence>
<organism>
    <name type="scientific">Oltmannsiellopsis viridis</name>
    <name type="common">Marine flagellate</name>
    <name type="synonym">Oltmannsiella viridis</name>
    <dbReference type="NCBI Taxonomy" id="51324"/>
    <lineage>
        <taxon>Eukaryota</taxon>
        <taxon>Viridiplantae</taxon>
        <taxon>Chlorophyta</taxon>
        <taxon>Ulvophyceae</taxon>
        <taxon>Oltmannsiellopsidales</taxon>
        <taxon>Oltmannsiellopsidaceae</taxon>
        <taxon>Oltmannsiellopsis</taxon>
    </lineage>
</organism>